<gene>
    <name evidence="1" type="primary">rpsO</name>
    <name type="ordered locus">CPF_1935</name>
</gene>
<keyword id="KW-0687">Ribonucleoprotein</keyword>
<keyword id="KW-0689">Ribosomal protein</keyword>
<keyword id="KW-0694">RNA-binding</keyword>
<keyword id="KW-0699">rRNA-binding</keyword>
<sequence>MDKIRKQEIIAKHARHEGDTGSPEVQIALLTERINSLTDHLRTHKKDHHSRRGLLMMVGQRRGLLNYLYEQDIERYRAIIKELGLRR</sequence>
<organism>
    <name type="scientific">Clostridium perfringens (strain ATCC 13124 / DSM 756 / JCM 1290 / NCIMB 6125 / NCTC 8237 / Type A)</name>
    <dbReference type="NCBI Taxonomy" id="195103"/>
    <lineage>
        <taxon>Bacteria</taxon>
        <taxon>Bacillati</taxon>
        <taxon>Bacillota</taxon>
        <taxon>Clostridia</taxon>
        <taxon>Eubacteriales</taxon>
        <taxon>Clostridiaceae</taxon>
        <taxon>Clostridium</taxon>
    </lineage>
</organism>
<dbReference type="EMBL" id="CP000246">
    <property type="protein sequence ID" value="ABG82840.1"/>
    <property type="molecule type" value="Genomic_DNA"/>
</dbReference>
<dbReference type="RefSeq" id="WP_003449423.1">
    <property type="nucleotide sequence ID" value="NC_008261.1"/>
</dbReference>
<dbReference type="SMR" id="Q0TPS2"/>
<dbReference type="STRING" id="195103.CPF_1935"/>
<dbReference type="PaxDb" id="195103-CPF_1935"/>
<dbReference type="GeneID" id="93001781"/>
<dbReference type="KEGG" id="cpf:CPF_1935"/>
<dbReference type="eggNOG" id="COG0184">
    <property type="taxonomic scope" value="Bacteria"/>
</dbReference>
<dbReference type="HOGENOM" id="CLU_148518_0_0_9"/>
<dbReference type="Proteomes" id="UP000001823">
    <property type="component" value="Chromosome"/>
</dbReference>
<dbReference type="GO" id="GO:0022627">
    <property type="term" value="C:cytosolic small ribosomal subunit"/>
    <property type="evidence" value="ECO:0007669"/>
    <property type="project" value="TreeGrafter"/>
</dbReference>
<dbReference type="GO" id="GO:0019843">
    <property type="term" value="F:rRNA binding"/>
    <property type="evidence" value="ECO:0007669"/>
    <property type="project" value="UniProtKB-UniRule"/>
</dbReference>
<dbReference type="GO" id="GO:0003735">
    <property type="term" value="F:structural constituent of ribosome"/>
    <property type="evidence" value="ECO:0007669"/>
    <property type="project" value="InterPro"/>
</dbReference>
<dbReference type="GO" id="GO:0006412">
    <property type="term" value="P:translation"/>
    <property type="evidence" value="ECO:0007669"/>
    <property type="project" value="UniProtKB-UniRule"/>
</dbReference>
<dbReference type="CDD" id="cd00353">
    <property type="entry name" value="Ribosomal_S15p_S13e"/>
    <property type="match status" value="1"/>
</dbReference>
<dbReference type="FunFam" id="1.10.287.10:FF:000002">
    <property type="entry name" value="30S ribosomal protein S15"/>
    <property type="match status" value="1"/>
</dbReference>
<dbReference type="Gene3D" id="6.10.250.3130">
    <property type="match status" value="1"/>
</dbReference>
<dbReference type="Gene3D" id="1.10.287.10">
    <property type="entry name" value="S15/NS1, RNA-binding"/>
    <property type="match status" value="1"/>
</dbReference>
<dbReference type="HAMAP" id="MF_01343_B">
    <property type="entry name" value="Ribosomal_uS15_B"/>
    <property type="match status" value="1"/>
</dbReference>
<dbReference type="InterPro" id="IPR000589">
    <property type="entry name" value="Ribosomal_uS15"/>
</dbReference>
<dbReference type="InterPro" id="IPR005290">
    <property type="entry name" value="Ribosomal_uS15_bac-type"/>
</dbReference>
<dbReference type="InterPro" id="IPR009068">
    <property type="entry name" value="uS15_NS1_RNA-bd_sf"/>
</dbReference>
<dbReference type="NCBIfam" id="TIGR00952">
    <property type="entry name" value="S15_bact"/>
    <property type="match status" value="1"/>
</dbReference>
<dbReference type="PANTHER" id="PTHR23321">
    <property type="entry name" value="RIBOSOMAL PROTEIN S15, BACTERIAL AND ORGANELLAR"/>
    <property type="match status" value="1"/>
</dbReference>
<dbReference type="PANTHER" id="PTHR23321:SF26">
    <property type="entry name" value="SMALL RIBOSOMAL SUBUNIT PROTEIN US15M"/>
    <property type="match status" value="1"/>
</dbReference>
<dbReference type="Pfam" id="PF00312">
    <property type="entry name" value="Ribosomal_S15"/>
    <property type="match status" value="1"/>
</dbReference>
<dbReference type="SMART" id="SM01387">
    <property type="entry name" value="Ribosomal_S15"/>
    <property type="match status" value="1"/>
</dbReference>
<dbReference type="SUPFAM" id="SSF47060">
    <property type="entry name" value="S15/NS1 RNA-binding domain"/>
    <property type="match status" value="1"/>
</dbReference>
<dbReference type="PROSITE" id="PS00362">
    <property type="entry name" value="RIBOSOMAL_S15"/>
    <property type="match status" value="1"/>
</dbReference>
<protein>
    <recommendedName>
        <fullName evidence="1">Small ribosomal subunit protein uS15</fullName>
    </recommendedName>
    <alternativeName>
        <fullName evidence="2">30S ribosomal protein S15</fullName>
    </alternativeName>
</protein>
<accession>Q0TPS2</accession>
<evidence type="ECO:0000255" key="1">
    <source>
        <dbReference type="HAMAP-Rule" id="MF_01343"/>
    </source>
</evidence>
<evidence type="ECO:0000305" key="2"/>
<comment type="function">
    <text evidence="1">One of the primary rRNA binding proteins, it binds directly to 16S rRNA where it helps nucleate assembly of the platform of the 30S subunit by binding and bridging several RNA helices of the 16S rRNA.</text>
</comment>
<comment type="function">
    <text evidence="1">Forms an intersubunit bridge (bridge B4) with the 23S rRNA of the 50S subunit in the ribosome.</text>
</comment>
<comment type="subunit">
    <text evidence="1">Part of the 30S ribosomal subunit. Forms a bridge to the 50S subunit in the 70S ribosome, contacting the 23S rRNA.</text>
</comment>
<comment type="similarity">
    <text evidence="1">Belongs to the universal ribosomal protein uS15 family.</text>
</comment>
<proteinExistence type="inferred from homology"/>
<feature type="chain" id="PRO_0000354192" description="Small ribosomal subunit protein uS15">
    <location>
        <begin position="1"/>
        <end position="87"/>
    </location>
</feature>
<reference key="1">
    <citation type="journal article" date="2006" name="Genome Res.">
        <title>Skewed genomic variability in strains of the toxigenic bacterial pathogen, Clostridium perfringens.</title>
        <authorList>
            <person name="Myers G.S.A."/>
            <person name="Rasko D.A."/>
            <person name="Cheung J.K."/>
            <person name="Ravel J."/>
            <person name="Seshadri R."/>
            <person name="DeBoy R.T."/>
            <person name="Ren Q."/>
            <person name="Varga J."/>
            <person name="Awad M.M."/>
            <person name="Brinkac L.M."/>
            <person name="Daugherty S.C."/>
            <person name="Haft D.H."/>
            <person name="Dodson R.J."/>
            <person name="Madupu R."/>
            <person name="Nelson W.C."/>
            <person name="Rosovitz M.J."/>
            <person name="Sullivan S.A."/>
            <person name="Khouri H."/>
            <person name="Dimitrov G.I."/>
            <person name="Watkins K.L."/>
            <person name="Mulligan S."/>
            <person name="Benton J."/>
            <person name="Radune D."/>
            <person name="Fisher D.J."/>
            <person name="Atkins H.S."/>
            <person name="Hiscox T."/>
            <person name="Jost B.H."/>
            <person name="Billington S.J."/>
            <person name="Songer J.G."/>
            <person name="McClane B.A."/>
            <person name="Titball R.W."/>
            <person name="Rood J.I."/>
            <person name="Melville S.B."/>
            <person name="Paulsen I.T."/>
        </authorList>
    </citation>
    <scope>NUCLEOTIDE SEQUENCE [LARGE SCALE GENOMIC DNA]</scope>
    <source>
        <strain>ATCC 13124 / DSM 756 / JCM 1290 / NCIMB 6125 / NCTC 8237 / S 107 / Type A</strain>
    </source>
</reference>
<name>RS15_CLOP1</name>